<organism>
    <name type="scientific">Bordetella parapertussis (strain 12822 / ATCC BAA-587 / NCTC 13253)</name>
    <dbReference type="NCBI Taxonomy" id="257311"/>
    <lineage>
        <taxon>Bacteria</taxon>
        <taxon>Pseudomonadati</taxon>
        <taxon>Pseudomonadota</taxon>
        <taxon>Betaproteobacteria</taxon>
        <taxon>Burkholderiales</taxon>
        <taxon>Alcaligenaceae</taxon>
        <taxon>Bordetella</taxon>
    </lineage>
</organism>
<keyword id="KW-0678">Repressor</keyword>
<keyword id="KW-0346">Stress response</keyword>
<keyword id="KW-0804">Transcription</keyword>
<keyword id="KW-0805">Transcription regulation</keyword>
<dbReference type="EMBL" id="BX640433">
    <property type="protein sequence ID" value="CAE38774.1"/>
    <property type="molecule type" value="Genomic_DNA"/>
</dbReference>
<dbReference type="RefSeq" id="WP_003814090.1">
    <property type="nucleotide sequence ID" value="NC_002928.3"/>
</dbReference>
<dbReference type="SMR" id="Q7W514"/>
<dbReference type="GeneID" id="93205276"/>
<dbReference type="KEGG" id="bpa:BPP3490"/>
<dbReference type="HOGENOM" id="CLU_050019_0_0_4"/>
<dbReference type="Proteomes" id="UP000001421">
    <property type="component" value="Chromosome"/>
</dbReference>
<dbReference type="GO" id="GO:0003677">
    <property type="term" value="F:DNA binding"/>
    <property type="evidence" value="ECO:0007669"/>
    <property type="project" value="InterPro"/>
</dbReference>
<dbReference type="GO" id="GO:0045892">
    <property type="term" value="P:negative regulation of DNA-templated transcription"/>
    <property type="evidence" value="ECO:0007669"/>
    <property type="project" value="UniProtKB-UniRule"/>
</dbReference>
<dbReference type="Gene3D" id="3.30.450.40">
    <property type="match status" value="1"/>
</dbReference>
<dbReference type="Gene3D" id="3.30.390.60">
    <property type="entry name" value="Heat-inducible transcription repressor hrca homolog, domain 3"/>
    <property type="match status" value="1"/>
</dbReference>
<dbReference type="Gene3D" id="1.10.10.10">
    <property type="entry name" value="Winged helix-like DNA-binding domain superfamily/Winged helix DNA-binding domain"/>
    <property type="match status" value="1"/>
</dbReference>
<dbReference type="HAMAP" id="MF_00081">
    <property type="entry name" value="HrcA"/>
    <property type="match status" value="1"/>
</dbReference>
<dbReference type="InterPro" id="IPR029016">
    <property type="entry name" value="GAF-like_dom_sf"/>
</dbReference>
<dbReference type="InterPro" id="IPR002571">
    <property type="entry name" value="HrcA"/>
</dbReference>
<dbReference type="InterPro" id="IPR021153">
    <property type="entry name" value="HrcA_C"/>
</dbReference>
<dbReference type="InterPro" id="IPR036388">
    <property type="entry name" value="WH-like_DNA-bd_sf"/>
</dbReference>
<dbReference type="InterPro" id="IPR036390">
    <property type="entry name" value="WH_DNA-bd_sf"/>
</dbReference>
<dbReference type="InterPro" id="IPR005104">
    <property type="entry name" value="WHTH_HrcA_DNA-bd"/>
</dbReference>
<dbReference type="InterPro" id="IPR023120">
    <property type="entry name" value="WHTH_transcript_rep_HrcA_IDD"/>
</dbReference>
<dbReference type="NCBIfam" id="TIGR00331">
    <property type="entry name" value="hrcA"/>
    <property type="match status" value="1"/>
</dbReference>
<dbReference type="PANTHER" id="PTHR34824">
    <property type="entry name" value="HEAT-INDUCIBLE TRANSCRIPTION REPRESSOR HRCA"/>
    <property type="match status" value="1"/>
</dbReference>
<dbReference type="PANTHER" id="PTHR34824:SF1">
    <property type="entry name" value="HEAT-INDUCIBLE TRANSCRIPTION REPRESSOR HRCA"/>
    <property type="match status" value="1"/>
</dbReference>
<dbReference type="Pfam" id="PF01628">
    <property type="entry name" value="HrcA"/>
    <property type="match status" value="1"/>
</dbReference>
<dbReference type="Pfam" id="PF03444">
    <property type="entry name" value="HrcA_DNA-bdg"/>
    <property type="match status" value="1"/>
</dbReference>
<dbReference type="PIRSF" id="PIRSF005485">
    <property type="entry name" value="HrcA"/>
    <property type="match status" value="1"/>
</dbReference>
<dbReference type="SUPFAM" id="SSF55781">
    <property type="entry name" value="GAF domain-like"/>
    <property type="match status" value="1"/>
</dbReference>
<dbReference type="SUPFAM" id="SSF46785">
    <property type="entry name" value="Winged helix' DNA-binding domain"/>
    <property type="match status" value="1"/>
</dbReference>
<sequence length="334" mass="36657">MDDRARALLKALIERYIADGQPVGSRTLSKVFDLSPATIRNVMADLEELGLIHSPHTSAGRVPTPRGYRMFVDSLLAVRAYQFEPAHIGELLPVSEPSRAVNAAAALLSNLTQFAGVVLTPKRTQIFRQIEFIRLSDKRVLLIIVTPEGDVQNRILSAQRDYTEAELLEAGNFFNVHFSGKSFDAVRRTLSTELAQLRDDISRLMQAAVEAGAEAADDGEAVVISGERKLLDVTDIASDMDRLRKMFSLFEKKTDLLQLLDVSSRAQGVQIYIGGDSQLVPMEEVSVITAPYGVDGKVIGTLGVIGPTRMAYERVIPIVDITARLLSNALSHNQ</sequence>
<gene>
    <name evidence="1" type="primary">hrcA</name>
    <name type="ordered locus">BPP3490</name>
</gene>
<comment type="function">
    <text evidence="1">Negative regulator of class I heat shock genes (grpE-dnaK-dnaJ and groELS operons). Prevents heat-shock induction of these operons.</text>
</comment>
<comment type="similarity">
    <text evidence="1">Belongs to the HrcA family.</text>
</comment>
<evidence type="ECO:0000255" key="1">
    <source>
        <dbReference type="HAMAP-Rule" id="MF_00081"/>
    </source>
</evidence>
<name>HRCA_BORPA</name>
<reference key="1">
    <citation type="journal article" date="2003" name="Nat. Genet.">
        <title>Comparative analysis of the genome sequences of Bordetella pertussis, Bordetella parapertussis and Bordetella bronchiseptica.</title>
        <authorList>
            <person name="Parkhill J."/>
            <person name="Sebaihia M."/>
            <person name="Preston A."/>
            <person name="Murphy L.D."/>
            <person name="Thomson N.R."/>
            <person name="Harris D.E."/>
            <person name="Holden M.T.G."/>
            <person name="Churcher C.M."/>
            <person name="Bentley S.D."/>
            <person name="Mungall K.L."/>
            <person name="Cerdeno-Tarraga A.-M."/>
            <person name="Temple L."/>
            <person name="James K.D."/>
            <person name="Harris B."/>
            <person name="Quail M.A."/>
            <person name="Achtman M."/>
            <person name="Atkin R."/>
            <person name="Baker S."/>
            <person name="Basham D."/>
            <person name="Bason N."/>
            <person name="Cherevach I."/>
            <person name="Chillingworth T."/>
            <person name="Collins M."/>
            <person name="Cronin A."/>
            <person name="Davis P."/>
            <person name="Doggett J."/>
            <person name="Feltwell T."/>
            <person name="Goble A."/>
            <person name="Hamlin N."/>
            <person name="Hauser H."/>
            <person name="Holroyd S."/>
            <person name="Jagels K."/>
            <person name="Leather S."/>
            <person name="Moule S."/>
            <person name="Norberczak H."/>
            <person name="O'Neil S."/>
            <person name="Ormond D."/>
            <person name="Price C."/>
            <person name="Rabbinowitsch E."/>
            <person name="Rutter S."/>
            <person name="Sanders M."/>
            <person name="Saunders D."/>
            <person name="Seeger K."/>
            <person name="Sharp S."/>
            <person name="Simmonds M."/>
            <person name="Skelton J."/>
            <person name="Squares R."/>
            <person name="Squares S."/>
            <person name="Stevens K."/>
            <person name="Unwin L."/>
            <person name="Whitehead S."/>
            <person name="Barrell B.G."/>
            <person name="Maskell D.J."/>
        </authorList>
    </citation>
    <scope>NUCLEOTIDE SEQUENCE [LARGE SCALE GENOMIC DNA]</scope>
    <source>
        <strain>12822 / ATCC BAA-587 / NCTC 13253</strain>
    </source>
</reference>
<proteinExistence type="inferred from homology"/>
<accession>Q7W514</accession>
<protein>
    <recommendedName>
        <fullName evidence="1">Heat-inducible transcription repressor HrcA</fullName>
    </recommendedName>
</protein>
<feature type="chain" id="PRO_0000182455" description="Heat-inducible transcription repressor HrcA">
    <location>
        <begin position="1"/>
        <end position="334"/>
    </location>
</feature>